<protein>
    <recommendedName>
        <fullName>Protein orai-3</fullName>
    </recommendedName>
    <alternativeName>
        <fullName>Transmembrane protein 142C</fullName>
    </alternativeName>
</protein>
<name>ORAI3_RAT</name>
<sequence>MKGGEGDTGEQAPLNPEVDSPAGSATYREFVHRGYLDLMGASQHSLRALSWRRLYLSRAKLKASSRTSALLSGFAMVAMVEVQLESDHEYPPGLLVAFSACTTVLVAVHLFALMVSTCLLPHIEAVSNIHNLNSVHQSPHQRLHRYVELAWGFSTALGTFLFLAEVVLVGWVKFVPIGAPMDKPAPVVPMSQVPPVTVSLSLASNLTPSSASVATTQQPPKACPPRQVCGSAHGPGWQAAMASTAIMVPVGLVFMAFALHFYRSLVAHKTDRHKQELEELSRLQGELQAV</sequence>
<comment type="function">
    <text evidence="2">Pore-forming subunit of two major inward rectifying Ca(2+) channels at the plasma membrane: Ca(2+) release-activated Ca(2+) (CRAC) channels and arachidonate-regulated Ca(2+)-selective (ARC) channels. Assembles with ORAI1 and ORAI2 to form hexameric CRAC channels that mediate Ca(2+) influx upon depletion of endoplasmic reticulum Ca(2+) store and channel activation by Ca(2+) sensor STIM1, a process known as store-operated Ca(2+) entry (SOCE). Various pore subunit combinations may account for distinct CRAC channel spatiotemporal and cell-type specific dynamics. ORAI1 mainly contributes to the generation of Ca(2+) plateaus involved in sustained Ca(2+) entry and is dispensable for cytosolic Ca(2+) oscillations, whereas ORAI2 and ORAI3 generate oscillatory patterns. CRAC channels assemble in Ca(2+) signaling microdomains where Ca(2+) influx is coupled to calmodulin and calcineurin signaling and activation of NFAT transcription factors recruited to ORAI1 via AKAP5. CRAC channels are the main pathway for Ca(2+) influx in T cells and promote the immune response to pathogens by activating NFAT-dependent cytokine and chemokine transcription. Assembles with ORAI1 to form channels that mediate store-independent Ca(2+) influx in response to inflammatory metabolites arachidonate or its derivative leukotriene C4, termed ARC and LRC channels respectively.</text>
</comment>
<comment type="catalytic activity">
    <reaction evidence="2">
        <text>Ca(2+)(in) = Ca(2+)(out)</text>
        <dbReference type="Rhea" id="RHEA:29671"/>
        <dbReference type="ChEBI" id="CHEBI:29108"/>
    </reaction>
    <physiologicalReaction direction="right-to-left" evidence="2">
        <dbReference type="Rhea" id="RHEA:29673"/>
    </physiologicalReaction>
</comment>
<comment type="activity regulation">
    <text evidence="2">CRAC channels are regulated by fast Ca(2+)-dependent inactivation (FCDI), a mechanism that limits Ca(2+) influx and cell toxicity. ORAI3 subunit displays prominent FCDI. Inhibited by lanthanides such as Gd(3+) ions.</text>
</comment>
<comment type="subunit">
    <text evidence="2">Oligomerizes in homomeric and heteromeric ORAI complexes. Native CRAC channels most likely consist of hexameric ORAI heteromers, implying that diverse ORAI1, ORAI2 and ORAI3 subunit combinations with distinct biophysical properties can operate in a cell-type specific way. ARC channels are heteropentamers consisting of three ORAI1 and two ORAI3 subunits. Interacts with STIM1; this regulates channel activity. Interacts with CRACR2A/EFCAB4B.</text>
</comment>
<comment type="subcellular location">
    <subcellularLocation>
        <location evidence="2">Cell membrane</location>
        <topology evidence="3">Multi-pass membrane protein</topology>
    </subcellularLocation>
    <text evidence="2">Colocalizes with STIM1 upon store depletion.</text>
</comment>
<comment type="similarity">
    <text evidence="5">Belongs to the Orai family.</text>
</comment>
<keyword id="KW-0106">Calcium</keyword>
<keyword id="KW-0107">Calcium channel</keyword>
<keyword id="KW-0109">Calcium transport</keyword>
<keyword id="KW-1003">Cell membrane</keyword>
<keyword id="KW-0407">Ion channel</keyword>
<keyword id="KW-0406">Ion transport</keyword>
<keyword id="KW-0472">Membrane</keyword>
<keyword id="KW-0597">Phosphoprotein</keyword>
<keyword id="KW-1185">Reference proteome</keyword>
<keyword id="KW-0812">Transmembrane</keyword>
<keyword id="KW-1133">Transmembrane helix</keyword>
<keyword id="KW-0813">Transport</keyword>
<accession>Q6AXR8</accession>
<proteinExistence type="evidence at transcript level"/>
<feature type="chain" id="PRO_0000234397" description="Protein orai-3">
    <location>
        <begin position="1"/>
        <end position="290"/>
    </location>
</feature>
<feature type="transmembrane region" description="Helical" evidence="3">
    <location>
        <begin position="63"/>
        <end position="82"/>
    </location>
</feature>
<feature type="transmembrane region" description="Helical" evidence="3">
    <location>
        <begin position="95"/>
        <end position="115"/>
    </location>
</feature>
<feature type="transmembrane region" description="Helical" evidence="3">
    <location>
        <begin position="157"/>
        <end position="177"/>
    </location>
</feature>
<feature type="transmembrane region" description="Helical" evidence="3">
    <location>
        <begin position="239"/>
        <end position="259"/>
    </location>
</feature>
<feature type="region of interest" description="Disordered" evidence="4">
    <location>
        <begin position="1"/>
        <end position="21"/>
    </location>
</feature>
<feature type="site" description="Confers selective permeability to Ca(2+) ions" evidence="2">
    <location>
        <position position="81"/>
    </location>
</feature>
<feature type="modified residue" description="Phosphoserine" evidence="1">
    <location>
        <position position="42"/>
    </location>
</feature>
<feature type="modified residue" description="Phosphoserine" evidence="1">
    <location>
        <position position="45"/>
    </location>
</feature>
<evidence type="ECO:0000250" key="1">
    <source>
        <dbReference type="UniProtKB" id="Q6P8G8"/>
    </source>
</evidence>
<evidence type="ECO:0000250" key="2">
    <source>
        <dbReference type="UniProtKB" id="Q9BRQ5"/>
    </source>
</evidence>
<evidence type="ECO:0000255" key="3"/>
<evidence type="ECO:0000256" key="4">
    <source>
        <dbReference type="SAM" id="MobiDB-lite"/>
    </source>
</evidence>
<evidence type="ECO:0000305" key="5"/>
<organism>
    <name type="scientific">Rattus norvegicus</name>
    <name type="common">Rat</name>
    <dbReference type="NCBI Taxonomy" id="10116"/>
    <lineage>
        <taxon>Eukaryota</taxon>
        <taxon>Metazoa</taxon>
        <taxon>Chordata</taxon>
        <taxon>Craniata</taxon>
        <taxon>Vertebrata</taxon>
        <taxon>Euteleostomi</taxon>
        <taxon>Mammalia</taxon>
        <taxon>Eutheria</taxon>
        <taxon>Euarchontoglires</taxon>
        <taxon>Glires</taxon>
        <taxon>Rodentia</taxon>
        <taxon>Myomorpha</taxon>
        <taxon>Muroidea</taxon>
        <taxon>Muridae</taxon>
        <taxon>Murinae</taxon>
        <taxon>Rattus</taxon>
    </lineage>
</organism>
<gene>
    <name type="primary">Orai3</name>
    <name type="synonym">Tmem142c</name>
</gene>
<reference key="1">
    <citation type="journal article" date="2004" name="Genome Res.">
        <title>The status, quality, and expansion of the NIH full-length cDNA project: the Mammalian Gene Collection (MGC).</title>
        <authorList>
            <consortium name="The MGC Project Team"/>
        </authorList>
    </citation>
    <scope>NUCLEOTIDE SEQUENCE [LARGE SCALE MRNA]</scope>
    <source>
        <tissue>Kidney</tissue>
    </source>
</reference>
<dbReference type="EMBL" id="BC079355">
    <property type="protein sequence ID" value="AAH79355.1"/>
    <property type="molecule type" value="mRNA"/>
</dbReference>
<dbReference type="RefSeq" id="NP_001014046.1">
    <property type="nucleotide sequence ID" value="NM_001014024.2"/>
</dbReference>
<dbReference type="SMR" id="Q6AXR8"/>
<dbReference type="FunCoup" id="Q6AXR8">
    <property type="interactions" value="412"/>
</dbReference>
<dbReference type="STRING" id="10116.ENSRNOP00000025732"/>
<dbReference type="PhosphoSitePlus" id="Q6AXR8"/>
<dbReference type="PaxDb" id="10116-ENSRNOP00000025732"/>
<dbReference type="GeneID" id="309000"/>
<dbReference type="KEGG" id="rno:309000"/>
<dbReference type="UCSC" id="RGD:1306538">
    <property type="organism name" value="rat"/>
</dbReference>
<dbReference type="AGR" id="RGD:1306538"/>
<dbReference type="CTD" id="93129"/>
<dbReference type="RGD" id="1306538">
    <property type="gene designation" value="Orai3"/>
</dbReference>
<dbReference type="eggNOG" id="KOG4298">
    <property type="taxonomic scope" value="Eukaryota"/>
</dbReference>
<dbReference type="HOGENOM" id="CLU_062509_1_0_1"/>
<dbReference type="InParanoid" id="Q6AXR8"/>
<dbReference type="OrthoDB" id="33867at9989"/>
<dbReference type="PhylomeDB" id="Q6AXR8"/>
<dbReference type="TreeFam" id="TF313576"/>
<dbReference type="PRO" id="PR:Q6AXR8"/>
<dbReference type="Proteomes" id="UP000002494">
    <property type="component" value="Unplaced"/>
</dbReference>
<dbReference type="GO" id="GO:0016020">
    <property type="term" value="C:membrane"/>
    <property type="evidence" value="ECO:0000266"/>
    <property type="project" value="RGD"/>
</dbReference>
<dbReference type="GO" id="GO:0005886">
    <property type="term" value="C:plasma membrane"/>
    <property type="evidence" value="ECO:0000266"/>
    <property type="project" value="RGD"/>
</dbReference>
<dbReference type="GO" id="GO:0015279">
    <property type="term" value="F:store-operated calcium channel activity"/>
    <property type="evidence" value="ECO:0000266"/>
    <property type="project" value="RGD"/>
</dbReference>
<dbReference type="GO" id="GO:0002115">
    <property type="term" value="P:store-operated calcium entry"/>
    <property type="evidence" value="ECO:0000266"/>
    <property type="project" value="RGD"/>
</dbReference>
<dbReference type="Gene3D" id="1.20.140.140">
    <property type="entry name" value="Calcium release-activated calcium channel protein Orai"/>
    <property type="match status" value="1"/>
</dbReference>
<dbReference type="InterPro" id="IPR012446">
    <property type="entry name" value="CRAC_channel"/>
</dbReference>
<dbReference type="InterPro" id="IPR038350">
    <property type="entry name" value="Orai_sf"/>
</dbReference>
<dbReference type="PANTHER" id="PTHR31501">
    <property type="entry name" value="CALCIUM RELEASE-ACTIVATED CALCIUM CHANNEL PROTEIN 1"/>
    <property type="match status" value="1"/>
</dbReference>
<dbReference type="PANTHER" id="PTHR31501:SF6">
    <property type="entry name" value="PROTEIN ORAI-3"/>
    <property type="match status" value="1"/>
</dbReference>
<dbReference type="Pfam" id="PF07856">
    <property type="entry name" value="Orai-1"/>
    <property type="match status" value="1"/>
</dbReference>